<proteinExistence type="inferred from homology"/>
<sequence>MDKKAARIRRATRARRKLQELGATRLVVHRTPRHIYAQVIAPNGSETLVAASTTEKAIIEQLKNTGNKEAAAVVGKIVAERALEKGIKSVSFDRSGFQYHGRVQALADAAREAGLQF</sequence>
<protein>
    <recommendedName>
        <fullName evidence="1">Large ribosomal subunit protein uL18</fullName>
    </recommendedName>
    <alternativeName>
        <fullName evidence="2">50S ribosomal protein L18</fullName>
    </alternativeName>
</protein>
<evidence type="ECO:0000255" key="1">
    <source>
        <dbReference type="HAMAP-Rule" id="MF_01337"/>
    </source>
</evidence>
<evidence type="ECO:0000305" key="2"/>
<dbReference type="EMBL" id="AM942759">
    <property type="protein sequence ID" value="CAR46412.1"/>
    <property type="molecule type" value="Genomic_DNA"/>
</dbReference>
<dbReference type="RefSeq" id="WP_004246947.1">
    <property type="nucleotide sequence ID" value="NC_010554.1"/>
</dbReference>
<dbReference type="SMR" id="B4F1K0"/>
<dbReference type="EnsemblBacteria" id="CAR46412">
    <property type="protein sequence ID" value="CAR46412"/>
    <property type="gene ID" value="PMI3271"/>
</dbReference>
<dbReference type="GeneID" id="6800549"/>
<dbReference type="KEGG" id="pmr:PMI3271"/>
<dbReference type="eggNOG" id="COG0256">
    <property type="taxonomic scope" value="Bacteria"/>
</dbReference>
<dbReference type="HOGENOM" id="CLU_098841_0_1_6"/>
<dbReference type="Proteomes" id="UP000008319">
    <property type="component" value="Chromosome"/>
</dbReference>
<dbReference type="GO" id="GO:0022625">
    <property type="term" value="C:cytosolic large ribosomal subunit"/>
    <property type="evidence" value="ECO:0007669"/>
    <property type="project" value="TreeGrafter"/>
</dbReference>
<dbReference type="GO" id="GO:0008097">
    <property type="term" value="F:5S rRNA binding"/>
    <property type="evidence" value="ECO:0007669"/>
    <property type="project" value="TreeGrafter"/>
</dbReference>
<dbReference type="GO" id="GO:0003735">
    <property type="term" value="F:structural constituent of ribosome"/>
    <property type="evidence" value="ECO:0007669"/>
    <property type="project" value="InterPro"/>
</dbReference>
<dbReference type="GO" id="GO:0006412">
    <property type="term" value="P:translation"/>
    <property type="evidence" value="ECO:0007669"/>
    <property type="project" value="UniProtKB-UniRule"/>
</dbReference>
<dbReference type="CDD" id="cd00432">
    <property type="entry name" value="Ribosomal_L18_L5e"/>
    <property type="match status" value="1"/>
</dbReference>
<dbReference type="FunFam" id="3.30.420.100:FF:000001">
    <property type="entry name" value="50S ribosomal protein L18"/>
    <property type="match status" value="1"/>
</dbReference>
<dbReference type="Gene3D" id="3.30.420.100">
    <property type="match status" value="1"/>
</dbReference>
<dbReference type="HAMAP" id="MF_01337_B">
    <property type="entry name" value="Ribosomal_uL18_B"/>
    <property type="match status" value="1"/>
</dbReference>
<dbReference type="InterPro" id="IPR004389">
    <property type="entry name" value="Ribosomal_uL18_bac-type"/>
</dbReference>
<dbReference type="InterPro" id="IPR005484">
    <property type="entry name" value="Ribosomal_uL18_bac/euk"/>
</dbReference>
<dbReference type="NCBIfam" id="TIGR00060">
    <property type="entry name" value="L18_bact"/>
    <property type="match status" value="1"/>
</dbReference>
<dbReference type="PANTHER" id="PTHR12899">
    <property type="entry name" value="39S RIBOSOMAL PROTEIN L18, MITOCHONDRIAL"/>
    <property type="match status" value="1"/>
</dbReference>
<dbReference type="PANTHER" id="PTHR12899:SF3">
    <property type="entry name" value="LARGE RIBOSOMAL SUBUNIT PROTEIN UL18M"/>
    <property type="match status" value="1"/>
</dbReference>
<dbReference type="Pfam" id="PF00861">
    <property type="entry name" value="Ribosomal_L18p"/>
    <property type="match status" value="1"/>
</dbReference>
<dbReference type="SUPFAM" id="SSF53137">
    <property type="entry name" value="Translational machinery components"/>
    <property type="match status" value="1"/>
</dbReference>
<comment type="function">
    <text evidence="1">This is one of the proteins that bind and probably mediate the attachment of the 5S RNA into the large ribosomal subunit, where it forms part of the central protuberance.</text>
</comment>
<comment type="subunit">
    <text evidence="1">Part of the 50S ribosomal subunit; part of the 5S rRNA/L5/L18/L25 subcomplex. Contacts the 5S and 23S rRNAs.</text>
</comment>
<comment type="similarity">
    <text evidence="1">Belongs to the universal ribosomal protein uL18 family.</text>
</comment>
<organism>
    <name type="scientific">Proteus mirabilis (strain HI4320)</name>
    <dbReference type="NCBI Taxonomy" id="529507"/>
    <lineage>
        <taxon>Bacteria</taxon>
        <taxon>Pseudomonadati</taxon>
        <taxon>Pseudomonadota</taxon>
        <taxon>Gammaproteobacteria</taxon>
        <taxon>Enterobacterales</taxon>
        <taxon>Morganellaceae</taxon>
        <taxon>Proteus</taxon>
    </lineage>
</organism>
<reference key="1">
    <citation type="journal article" date="2008" name="J. Bacteriol.">
        <title>Complete genome sequence of uropathogenic Proteus mirabilis, a master of both adherence and motility.</title>
        <authorList>
            <person name="Pearson M.M."/>
            <person name="Sebaihia M."/>
            <person name="Churcher C."/>
            <person name="Quail M.A."/>
            <person name="Seshasayee A.S."/>
            <person name="Luscombe N.M."/>
            <person name="Abdellah Z."/>
            <person name="Arrosmith C."/>
            <person name="Atkin B."/>
            <person name="Chillingworth T."/>
            <person name="Hauser H."/>
            <person name="Jagels K."/>
            <person name="Moule S."/>
            <person name="Mungall K."/>
            <person name="Norbertczak H."/>
            <person name="Rabbinowitsch E."/>
            <person name="Walker D."/>
            <person name="Whithead S."/>
            <person name="Thomson N.R."/>
            <person name="Rather P.N."/>
            <person name="Parkhill J."/>
            <person name="Mobley H.L.T."/>
        </authorList>
    </citation>
    <scope>NUCLEOTIDE SEQUENCE [LARGE SCALE GENOMIC DNA]</scope>
    <source>
        <strain>HI4320</strain>
    </source>
</reference>
<name>RL18_PROMH</name>
<accession>B4F1K0</accession>
<feature type="chain" id="PRO_1000142703" description="Large ribosomal subunit protein uL18">
    <location>
        <begin position="1"/>
        <end position="117"/>
    </location>
</feature>
<gene>
    <name evidence="1" type="primary">rplR</name>
    <name type="ordered locus">PMI3271</name>
</gene>
<keyword id="KW-1185">Reference proteome</keyword>
<keyword id="KW-0687">Ribonucleoprotein</keyword>
<keyword id="KW-0689">Ribosomal protein</keyword>
<keyword id="KW-0694">RNA-binding</keyword>
<keyword id="KW-0699">rRNA-binding</keyword>